<sequence length="162" mass="18727">MTPRKPFWQTKTLAEMTVPEWESLCDGCGLCCLVRFEDEDTGEIIPTRVHCQLFDERLCRCKDYPNRKKTVPDCIKLTPYNIEDLEWMPPSCAYRRLHEGKDLPLWHPLVTGDPESTHKAGVSIRNQTVSELSFKDAEDAMDFVATDLMRDRGDDLYEPEEG</sequence>
<feature type="chain" id="PRO_1000147698" description="UPF0260 protein CCNA_03385">
    <location>
        <begin position="1"/>
        <end position="162"/>
    </location>
</feature>
<proteinExistence type="inferred from homology"/>
<keyword id="KW-1185">Reference proteome</keyword>
<comment type="similarity">
    <text evidence="1">Belongs to the UPF0260 family.</text>
</comment>
<name>Y3385_CAUVN</name>
<dbReference type="EMBL" id="CP001340">
    <property type="protein sequence ID" value="ACL96850.1"/>
    <property type="molecule type" value="Genomic_DNA"/>
</dbReference>
<dbReference type="RefSeq" id="WP_010921108.1">
    <property type="nucleotide sequence ID" value="NC_011916.1"/>
</dbReference>
<dbReference type="RefSeq" id="YP_002518758.1">
    <property type="nucleotide sequence ID" value="NC_011916.1"/>
</dbReference>
<dbReference type="GeneID" id="7332059"/>
<dbReference type="KEGG" id="ccs:CCNA_03385"/>
<dbReference type="PATRIC" id="fig|565050.3.peg.3299"/>
<dbReference type="HOGENOM" id="CLU_109769_0_1_5"/>
<dbReference type="OrthoDB" id="9786855at2"/>
<dbReference type="PhylomeDB" id="B8H4M6"/>
<dbReference type="Proteomes" id="UP000001364">
    <property type="component" value="Chromosome"/>
</dbReference>
<dbReference type="HAMAP" id="MF_00676">
    <property type="entry name" value="UPF0260"/>
    <property type="match status" value="1"/>
</dbReference>
<dbReference type="InterPro" id="IPR005358">
    <property type="entry name" value="Puta_zinc/iron-chelating_dom"/>
</dbReference>
<dbReference type="InterPro" id="IPR008228">
    <property type="entry name" value="UCP006173"/>
</dbReference>
<dbReference type="NCBIfam" id="NF003501">
    <property type="entry name" value="PRK05170.1-5"/>
    <property type="match status" value="1"/>
</dbReference>
<dbReference type="NCBIfam" id="NF003507">
    <property type="entry name" value="PRK05170.2-5"/>
    <property type="match status" value="1"/>
</dbReference>
<dbReference type="PANTHER" id="PTHR37421">
    <property type="entry name" value="UPF0260 PROTEIN YCGN"/>
    <property type="match status" value="1"/>
</dbReference>
<dbReference type="PANTHER" id="PTHR37421:SF1">
    <property type="entry name" value="UPF0260 PROTEIN YCGN"/>
    <property type="match status" value="1"/>
</dbReference>
<dbReference type="Pfam" id="PF03692">
    <property type="entry name" value="CxxCxxCC"/>
    <property type="match status" value="1"/>
</dbReference>
<dbReference type="PIRSF" id="PIRSF006173">
    <property type="entry name" value="UCP006173"/>
    <property type="match status" value="1"/>
</dbReference>
<accession>B8H4M6</accession>
<gene>
    <name type="ordered locus">CCNA_03385</name>
</gene>
<organism>
    <name type="scientific">Caulobacter vibrioides (strain NA1000 / CB15N)</name>
    <name type="common">Caulobacter crescentus</name>
    <dbReference type="NCBI Taxonomy" id="565050"/>
    <lineage>
        <taxon>Bacteria</taxon>
        <taxon>Pseudomonadati</taxon>
        <taxon>Pseudomonadota</taxon>
        <taxon>Alphaproteobacteria</taxon>
        <taxon>Caulobacterales</taxon>
        <taxon>Caulobacteraceae</taxon>
        <taxon>Caulobacter</taxon>
    </lineage>
</organism>
<evidence type="ECO:0000255" key="1">
    <source>
        <dbReference type="HAMAP-Rule" id="MF_00676"/>
    </source>
</evidence>
<protein>
    <recommendedName>
        <fullName evidence="1">UPF0260 protein CCNA_03385</fullName>
    </recommendedName>
</protein>
<reference key="1">
    <citation type="journal article" date="2010" name="J. Bacteriol.">
        <title>The genetic basis of laboratory adaptation in Caulobacter crescentus.</title>
        <authorList>
            <person name="Marks M.E."/>
            <person name="Castro-Rojas C.M."/>
            <person name="Teiling C."/>
            <person name="Du L."/>
            <person name="Kapatral V."/>
            <person name="Walunas T.L."/>
            <person name="Crosson S."/>
        </authorList>
    </citation>
    <scope>NUCLEOTIDE SEQUENCE [LARGE SCALE GENOMIC DNA]</scope>
    <source>
        <strain>NA1000 / CB15N</strain>
    </source>
</reference>